<evidence type="ECO:0000250" key="1">
    <source>
        <dbReference type="UniProtKB" id="Q6IQ21"/>
    </source>
</evidence>
<evidence type="ECO:0000255" key="2">
    <source>
        <dbReference type="PROSITE-ProRule" id="PRU00042"/>
    </source>
</evidence>
<evidence type="ECO:0000305" key="3"/>
<name>ZN770_MOUSE</name>
<feature type="chain" id="PRO_0000280437" description="Zinc finger protein 770">
    <location>
        <begin position="1"/>
        <end position="705"/>
    </location>
</feature>
<feature type="zinc finger region" description="C2H2-type 1" evidence="2">
    <location>
        <begin position="31"/>
        <end position="53"/>
    </location>
</feature>
<feature type="zinc finger region" description="C2H2-type 2" evidence="2">
    <location>
        <begin position="59"/>
        <end position="81"/>
    </location>
</feature>
<feature type="zinc finger region" description="C2H2-type 3" evidence="2">
    <location>
        <begin position="85"/>
        <end position="107"/>
    </location>
</feature>
<feature type="zinc finger region" description="C2H2-type 4" evidence="2">
    <location>
        <begin position="164"/>
        <end position="186"/>
    </location>
</feature>
<feature type="zinc finger region" description="C2H2-type 5" evidence="2">
    <location>
        <begin position="192"/>
        <end position="214"/>
    </location>
</feature>
<feature type="zinc finger region" description="C2H2-type 6" evidence="2">
    <location>
        <begin position="220"/>
        <end position="242"/>
    </location>
</feature>
<feature type="zinc finger region" description="C2H2-type 7; degenerate" evidence="2">
    <location>
        <begin position="298"/>
        <end position="322"/>
    </location>
</feature>
<feature type="zinc finger region" description="C2H2-type 8" evidence="2">
    <location>
        <begin position="485"/>
        <end position="507"/>
    </location>
</feature>
<feature type="zinc finger region" description="C2H2-type 9" evidence="2">
    <location>
        <begin position="513"/>
        <end position="535"/>
    </location>
</feature>
<feature type="zinc finger region" description="C2H2-type 10" evidence="2">
    <location>
        <begin position="640"/>
        <end position="662"/>
    </location>
</feature>
<feature type="zinc finger region" description="C2H2-type 11" evidence="2">
    <location>
        <begin position="668"/>
        <end position="690"/>
    </location>
</feature>
<feature type="cross-link" description="Glycyl lysine isopeptide (Lys-Gly) (interchain with G-Cter in SUMO2)" evidence="1">
    <location>
        <position position="16"/>
    </location>
</feature>
<feature type="cross-link" description="Glycyl lysine isopeptide (Lys-Gly) (interchain with G-Cter in SUMO2)" evidence="1">
    <location>
        <position position="116"/>
    </location>
</feature>
<feature type="cross-link" description="Glycyl lysine isopeptide (Lys-Gly) (interchain with G-Cter in SUMO2)" evidence="1">
    <location>
        <position position="124"/>
    </location>
</feature>
<feature type="cross-link" description="Glycyl lysine isopeptide (Lys-Gly) (interchain with G-Cter in SUMO2)" evidence="1">
    <location>
        <position position="149"/>
    </location>
</feature>
<feature type="cross-link" description="Glycyl lysine isopeptide (Lys-Gly) (interchain with G-Cter in SUMO2)" evidence="1">
    <location>
        <position position="266"/>
    </location>
</feature>
<feature type="cross-link" description="Glycyl lysine isopeptide (Lys-Gly) (interchain with G-Cter in SUMO2)" evidence="1">
    <location>
        <position position="698"/>
    </location>
</feature>
<feature type="sequence conflict" description="In Ref. 1; BAC31677." evidence="3" ref="1">
    <original>A</original>
    <variation>G</variation>
    <location>
        <position position="47"/>
    </location>
</feature>
<feature type="sequence conflict" description="In Ref. 1; BAE37689." evidence="3" ref="1">
    <original>K</original>
    <variation>E</variation>
    <location>
        <position position="230"/>
    </location>
</feature>
<feature type="sequence conflict" description="In Ref. 1; BAC36857." evidence="3" ref="1">
    <original>K</original>
    <variation>R</variation>
    <location>
        <position position="256"/>
    </location>
</feature>
<comment type="function">
    <text>May be involved in transcriptional regulation.</text>
</comment>
<comment type="subcellular location">
    <subcellularLocation>
        <location evidence="3">Nucleus</location>
    </subcellularLocation>
</comment>
<comment type="similarity">
    <text evidence="3">Belongs to the krueppel C2H2-type zinc-finger protein family.</text>
</comment>
<sequence length="705" mass="81252">MPLRNVMAENNFKMLKIQQCVANKLPRNRPYICNICFKHFETPSKLARHYLIHTGQKPFECDVCHKNFRQLVHLERHQLTHNLPFSCNICQRHFKNLKTFVKHQQLHNESYHNDVKVRRLLETKQEKPVYGMCNTFTADERWALHPCSKSDATYSTTKRRKNIHACTICGKMFPSQSKLDRHSLIHTGQRPFKCVLCSKSFRQSTHLKIHQLTHSEERPFQCCFCQKGFKIQSKLLKHKQIHTRNKTLQNLPLKVKSPESCPLPNKLNAKQDAFESGDMGESEENNPLDVHSIYIVPFQCSECEECFESEQILNGHKCLPARGGRVPSRLKRSCNYKTIVKKLLAKLKRAGGKKSDDLQSEKKRTFKSNYLKNCERSSGKPNIEQTQRTFVGSLSRHGSYKTVSKKKKKTLALPFSWQKQFQSQNTGKSLQGILTTGSILSMDGSVNNKDLSIYGSSGEEYLNCDMLQCGFSDSSENIHTGHKMCPCDKCDKVFPSISKLQRHYLIHTGQRPFDCNVCGKSFRQSAHLKRHKLTHIEKIPYSSFWRVDFGNVNQLFIHPSDDVSYNASQQCEGLGSQSCESSESSQVSEIEVKVEPEDFLLGSHCRSRQSYLANALVESEQSHHCYSYLGRPERSDGLLYQCSVCCKHFRSPSKLERHYLIHAGQKPFECSVCGKTFRQAPHWKRHQLTHFKERPQEKVVLDSTV</sequence>
<proteinExistence type="evidence at transcript level"/>
<accession>Q8BIQ8</accession>
<accession>Q3TPP6</accession>
<accession>Q8BK15</accession>
<accession>Q8BLQ1</accession>
<dbReference type="EMBL" id="AK032578">
    <property type="protein sequence ID" value="BAC27932.1"/>
    <property type="molecule type" value="mRNA"/>
</dbReference>
<dbReference type="EMBL" id="AK043843">
    <property type="protein sequence ID" value="BAC31677.1"/>
    <property type="molecule type" value="mRNA"/>
</dbReference>
<dbReference type="EMBL" id="AK077547">
    <property type="protein sequence ID" value="BAC36857.1"/>
    <property type="molecule type" value="mRNA"/>
</dbReference>
<dbReference type="EMBL" id="AK164226">
    <property type="protein sequence ID" value="BAE37689.1"/>
    <property type="molecule type" value="mRNA"/>
</dbReference>
<dbReference type="EMBL" id="AL844569">
    <property type="status" value="NOT_ANNOTATED_CDS"/>
    <property type="molecule type" value="Genomic_DNA"/>
</dbReference>
<dbReference type="CCDS" id="CCDS16566.1"/>
<dbReference type="RefSeq" id="NP_780675.1">
    <property type="nucleotide sequence ID" value="NM_175466.4"/>
</dbReference>
<dbReference type="RefSeq" id="XP_011237766.1">
    <property type="nucleotide sequence ID" value="XM_011239464.2"/>
</dbReference>
<dbReference type="SMR" id="Q8BIQ8"/>
<dbReference type="BioGRID" id="230737">
    <property type="interactions" value="18"/>
</dbReference>
<dbReference type="FunCoup" id="Q8BIQ8">
    <property type="interactions" value="671"/>
</dbReference>
<dbReference type="STRING" id="10090.ENSMUSP00000052194"/>
<dbReference type="iPTMnet" id="Q8BIQ8"/>
<dbReference type="PhosphoSitePlus" id="Q8BIQ8"/>
<dbReference type="PaxDb" id="10090-ENSMUSP00000052194"/>
<dbReference type="Antibodypedia" id="9792">
    <property type="antibodies" value="12 antibodies from 9 providers"/>
</dbReference>
<dbReference type="DNASU" id="228491"/>
<dbReference type="Ensembl" id="ENSMUST00000050668.4">
    <property type="protein sequence ID" value="ENSMUSP00000052194.4"/>
    <property type="gene ID" value="ENSMUSG00000040321.4"/>
</dbReference>
<dbReference type="GeneID" id="228491"/>
<dbReference type="KEGG" id="mmu:228491"/>
<dbReference type="UCSC" id="uc008lqj.2">
    <property type="organism name" value="mouse"/>
</dbReference>
<dbReference type="AGR" id="MGI:2445100"/>
<dbReference type="CTD" id="228491"/>
<dbReference type="MGI" id="MGI:2445100">
    <property type="gene designation" value="Zfp770"/>
</dbReference>
<dbReference type="VEuPathDB" id="HostDB:ENSMUSG00000040321"/>
<dbReference type="eggNOG" id="KOG1721">
    <property type="taxonomic scope" value="Eukaryota"/>
</dbReference>
<dbReference type="GeneTree" id="ENSGT00940000161963"/>
<dbReference type="HOGENOM" id="CLU_002678_44_7_1"/>
<dbReference type="InParanoid" id="Q8BIQ8"/>
<dbReference type="OMA" id="SWQKHFQ"/>
<dbReference type="OrthoDB" id="8113227at2759"/>
<dbReference type="PhylomeDB" id="Q8BIQ8"/>
<dbReference type="TreeFam" id="TF335560"/>
<dbReference type="Reactome" id="R-MMU-212436">
    <property type="pathway name" value="Generic Transcription Pathway"/>
</dbReference>
<dbReference type="BioGRID-ORCS" id="228491">
    <property type="hits" value="3 hits in 77 CRISPR screens"/>
</dbReference>
<dbReference type="ChiTaRS" id="Zfp770">
    <property type="organism name" value="mouse"/>
</dbReference>
<dbReference type="PRO" id="PR:Q8BIQ8"/>
<dbReference type="Proteomes" id="UP000000589">
    <property type="component" value="Chromosome 2"/>
</dbReference>
<dbReference type="RNAct" id="Q8BIQ8">
    <property type="molecule type" value="protein"/>
</dbReference>
<dbReference type="Bgee" id="ENSMUSG00000040321">
    <property type="expression patterns" value="Expressed in manus and 215 other cell types or tissues"/>
</dbReference>
<dbReference type="GO" id="GO:0005634">
    <property type="term" value="C:nucleus"/>
    <property type="evidence" value="ECO:0007669"/>
    <property type="project" value="UniProtKB-SubCell"/>
</dbReference>
<dbReference type="GO" id="GO:0003677">
    <property type="term" value="F:DNA binding"/>
    <property type="evidence" value="ECO:0007669"/>
    <property type="project" value="UniProtKB-KW"/>
</dbReference>
<dbReference type="GO" id="GO:0008270">
    <property type="term" value="F:zinc ion binding"/>
    <property type="evidence" value="ECO:0007669"/>
    <property type="project" value="UniProtKB-KW"/>
</dbReference>
<dbReference type="FunFam" id="3.30.160.60:FF:000286">
    <property type="entry name" value="Zinc finger protein 770"/>
    <property type="match status" value="1"/>
</dbReference>
<dbReference type="FunFam" id="3.30.160.60:FF:000904">
    <property type="entry name" value="Zinc finger protein 770"/>
    <property type="match status" value="1"/>
</dbReference>
<dbReference type="FunFam" id="3.30.160.60:FF:000978">
    <property type="entry name" value="Zinc finger protein 770"/>
    <property type="match status" value="1"/>
</dbReference>
<dbReference type="FunFam" id="3.30.160.60:FF:001194">
    <property type="entry name" value="Zinc finger protein 770"/>
    <property type="match status" value="1"/>
</dbReference>
<dbReference type="FunFam" id="3.30.160.60:FF:001196">
    <property type="entry name" value="Zinc finger protein 770"/>
    <property type="match status" value="1"/>
</dbReference>
<dbReference type="FunFam" id="3.30.160.60:FF:001860">
    <property type="entry name" value="Zinc finger protein 770"/>
    <property type="match status" value="1"/>
</dbReference>
<dbReference type="Gene3D" id="3.30.160.60">
    <property type="entry name" value="Classic Zinc Finger"/>
    <property type="match status" value="9"/>
</dbReference>
<dbReference type="InterPro" id="IPR036236">
    <property type="entry name" value="Znf_C2H2_sf"/>
</dbReference>
<dbReference type="InterPro" id="IPR013087">
    <property type="entry name" value="Znf_C2H2_type"/>
</dbReference>
<dbReference type="PANTHER" id="PTHR24390">
    <property type="entry name" value="ZINC FINGER PROTEIN"/>
    <property type="match status" value="1"/>
</dbReference>
<dbReference type="PANTHER" id="PTHR24390:SF209">
    <property type="entry name" value="ZINC FINGER PROTEIN 770"/>
    <property type="match status" value="1"/>
</dbReference>
<dbReference type="Pfam" id="PF00096">
    <property type="entry name" value="zf-C2H2"/>
    <property type="match status" value="7"/>
</dbReference>
<dbReference type="SMART" id="SM00355">
    <property type="entry name" value="ZnF_C2H2"/>
    <property type="match status" value="11"/>
</dbReference>
<dbReference type="SUPFAM" id="SSF57667">
    <property type="entry name" value="beta-beta-alpha zinc fingers"/>
    <property type="match status" value="6"/>
</dbReference>
<dbReference type="PROSITE" id="PS00028">
    <property type="entry name" value="ZINC_FINGER_C2H2_1"/>
    <property type="match status" value="10"/>
</dbReference>
<dbReference type="PROSITE" id="PS50157">
    <property type="entry name" value="ZINC_FINGER_C2H2_2"/>
    <property type="match status" value="11"/>
</dbReference>
<protein>
    <recommendedName>
        <fullName>Zinc finger protein 770</fullName>
    </recommendedName>
</protein>
<reference key="1">
    <citation type="journal article" date="2005" name="Science">
        <title>The transcriptional landscape of the mammalian genome.</title>
        <authorList>
            <person name="Carninci P."/>
            <person name="Kasukawa T."/>
            <person name="Katayama S."/>
            <person name="Gough J."/>
            <person name="Frith M.C."/>
            <person name="Maeda N."/>
            <person name="Oyama R."/>
            <person name="Ravasi T."/>
            <person name="Lenhard B."/>
            <person name="Wells C."/>
            <person name="Kodzius R."/>
            <person name="Shimokawa K."/>
            <person name="Bajic V.B."/>
            <person name="Brenner S.E."/>
            <person name="Batalov S."/>
            <person name="Forrest A.R."/>
            <person name="Zavolan M."/>
            <person name="Davis M.J."/>
            <person name="Wilming L.G."/>
            <person name="Aidinis V."/>
            <person name="Allen J.E."/>
            <person name="Ambesi-Impiombato A."/>
            <person name="Apweiler R."/>
            <person name="Aturaliya R.N."/>
            <person name="Bailey T.L."/>
            <person name="Bansal M."/>
            <person name="Baxter L."/>
            <person name="Beisel K.W."/>
            <person name="Bersano T."/>
            <person name="Bono H."/>
            <person name="Chalk A.M."/>
            <person name="Chiu K.P."/>
            <person name="Choudhary V."/>
            <person name="Christoffels A."/>
            <person name="Clutterbuck D.R."/>
            <person name="Crowe M.L."/>
            <person name="Dalla E."/>
            <person name="Dalrymple B.P."/>
            <person name="de Bono B."/>
            <person name="Della Gatta G."/>
            <person name="di Bernardo D."/>
            <person name="Down T."/>
            <person name="Engstrom P."/>
            <person name="Fagiolini M."/>
            <person name="Faulkner G."/>
            <person name="Fletcher C.F."/>
            <person name="Fukushima T."/>
            <person name="Furuno M."/>
            <person name="Futaki S."/>
            <person name="Gariboldi M."/>
            <person name="Georgii-Hemming P."/>
            <person name="Gingeras T.R."/>
            <person name="Gojobori T."/>
            <person name="Green R.E."/>
            <person name="Gustincich S."/>
            <person name="Harbers M."/>
            <person name="Hayashi Y."/>
            <person name="Hensch T.K."/>
            <person name="Hirokawa N."/>
            <person name="Hill D."/>
            <person name="Huminiecki L."/>
            <person name="Iacono M."/>
            <person name="Ikeo K."/>
            <person name="Iwama A."/>
            <person name="Ishikawa T."/>
            <person name="Jakt M."/>
            <person name="Kanapin A."/>
            <person name="Katoh M."/>
            <person name="Kawasawa Y."/>
            <person name="Kelso J."/>
            <person name="Kitamura H."/>
            <person name="Kitano H."/>
            <person name="Kollias G."/>
            <person name="Krishnan S.P."/>
            <person name="Kruger A."/>
            <person name="Kummerfeld S.K."/>
            <person name="Kurochkin I.V."/>
            <person name="Lareau L.F."/>
            <person name="Lazarevic D."/>
            <person name="Lipovich L."/>
            <person name="Liu J."/>
            <person name="Liuni S."/>
            <person name="McWilliam S."/>
            <person name="Madan Babu M."/>
            <person name="Madera M."/>
            <person name="Marchionni L."/>
            <person name="Matsuda H."/>
            <person name="Matsuzawa S."/>
            <person name="Miki H."/>
            <person name="Mignone F."/>
            <person name="Miyake S."/>
            <person name="Morris K."/>
            <person name="Mottagui-Tabar S."/>
            <person name="Mulder N."/>
            <person name="Nakano N."/>
            <person name="Nakauchi H."/>
            <person name="Ng P."/>
            <person name="Nilsson R."/>
            <person name="Nishiguchi S."/>
            <person name="Nishikawa S."/>
            <person name="Nori F."/>
            <person name="Ohara O."/>
            <person name="Okazaki Y."/>
            <person name="Orlando V."/>
            <person name="Pang K.C."/>
            <person name="Pavan W.J."/>
            <person name="Pavesi G."/>
            <person name="Pesole G."/>
            <person name="Petrovsky N."/>
            <person name="Piazza S."/>
            <person name="Reed J."/>
            <person name="Reid J.F."/>
            <person name="Ring B.Z."/>
            <person name="Ringwald M."/>
            <person name="Rost B."/>
            <person name="Ruan Y."/>
            <person name="Salzberg S.L."/>
            <person name="Sandelin A."/>
            <person name="Schneider C."/>
            <person name="Schoenbach C."/>
            <person name="Sekiguchi K."/>
            <person name="Semple C.A."/>
            <person name="Seno S."/>
            <person name="Sessa L."/>
            <person name="Sheng Y."/>
            <person name="Shibata Y."/>
            <person name="Shimada H."/>
            <person name="Shimada K."/>
            <person name="Silva D."/>
            <person name="Sinclair B."/>
            <person name="Sperling S."/>
            <person name="Stupka E."/>
            <person name="Sugiura K."/>
            <person name="Sultana R."/>
            <person name="Takenaka Y."/>
            <person name="Taki K."/>
            <person name="Tammoja K."/>
            <person name="Tan S.L."/>
            <person name="Tang S."/>
            <person name="Taylor M.S."/>
            <person name="Tegner J."/>
            <person name="Teichmann S.A."/>
            <person name="Ueda H.R."/>
            <person name="van Nimwegen E."/>
            <person name="Verardo R."/>
            <person name="Wei C.L."/>
            <person name="Yagi K."/>
            <person name="Yamanishi H."/>
            <person name="Zabarovsky E."/>
            <person name="Zhu S."/>
            <person name="Zimmer A."/>
            <person name="Hide W."/>
            <person name="Bult C."/>
            <person name="Grimmond S.M."/>
            <person name="Teasdale R.D."/>
            <person name="Liu E.T."/>
            <person name="Brusic V."/>
            <person name="Quackenbush J."/>
            <person name="Wahlestedt C."/>
            <person name="Mattick J.S."/>
            <person name="Hume D.A."/>
            <person name="Kai C."/>
            <person name="Sasaki D."/>
            <person name="Tomaru Y."/>
            <person name="Fukuda S."/>
            <person name="Kanamori-Katayama M."/>
            <person name="Suzuki M."/>
            <person name="Aoki J."/>
            <person name="Arakawa T."/>
            <person name="Iida J."/>
            <person name="Imamura K."/>
            <person name="Itoh M."/>
            <person name="Kato T."/>
            <person name="Kawaji H."/>
            <person name="Kawagashira N."/>
            <person name="Kawashima T."/>
            <person name="Kojima M."/>
            <person name="Kondo S."/>
            <person name="Konno H."/>
            <person name="Nakano K."/>
            <person name="Ninomiya N."/>
            <person name="Nishio T."/>
            <person name="Okada M."/>
            <person name="Plessy C."/>
            <person name="Shibata K."/>
            <person name="Shiraki T."/>
            <person name="Suzuki S."/>
            <person name="Tagami M."/>
            <person name="Waki K."/>
            <person name="Watahiki A."/>
            <person name="Okamura-Oho Y."/>
            <person name="Suzuki H."/>
            <person name="Kawai J."/>
            <person name="Hayashizaki Y."/>
        </authorList>
    </citation>
    <scope>NUCLEOTIDE SEQUENCE [LARGE SCALE MRNA]</scope>
    <source>
        <strain>C57BL/6J</strain>
        <tissue>Brain cortex</tissue>
        <tissue>Embryo</tissue>
        <tissue>Olfactory bulb</tissue>
    </source>
</reference>
<reference key="2">
    <citation type="journal article" date="2009" name="PLoS Biol.">
        <title>Lineage-specific biology revealed by a finished genome assembly of the mouse.</title>
        <authorList>
            <person name="Church D.M."/>
            <person name="Goodstadt L."/>
            <person name="Hillier L.W."/>
            <person name="Zody M.C."/>
            <person name="Goldstein S."/>
            <person name="She X."/>
            <person name="Bult C.J."/>
            <person name="Agarwala R."/>
            <person name="Cherry J.L."/>
            <person name="DiCuccio M."/>
            <person name="Hlavina W."/>
            <person name="Kapustin Y."/>
            <person name="Meric P."/>
            <person name="Maglott D."/>
            <person name="Birtle Z."/>
            <person name="Marques A.C."/>
            <person name="Graves T."/>
            <person name="Zhou S."/>
            <person name="Teague B."/>
            <person name="Potamousis K."/>
            <person name="Churas C."/>
            <person name="Place M."/>
            <person name="Herschleb J."/>
            <person name="Runnheim R."/>
            <person name="Forrest D."/>
            <person name="Amos-Landgraf J."/>
            <person name="Schwartz D.C."/>
            <person name="Cheng Z."/>
            <person name="Lindblad-Toh K."/>
            <person name="Eichler E.E."/>
            <person name="Ponting C.P."/>
        </authorList>
    </citation>
    <scope>NUCLEOTIDE SEQUENCE [LARGE SCALE GENOMIC DNA]</scope>
    <source>
        <strain>C57BL/6J</strain>
    </source>
</reference>
<organism>
    <name type="scientific">Mus musculus</name>
    <name type="common">Mouse</name>
    <dbReference type="NCBI Taxonomy" id="10090"/>
    <lineage>
        <taxon>Eukaryota</taxon>
        <taxon>Metazoa</taxon>
        <taxon>Chordata</taxon>
        <taxon>Craniata</taxon>
        <taxon>Vertebrata</taxon>
        <taxon>Euteleostomi</taxon>
        <taxon>Mammalia</taxon>
        <taxon>Eutheria</taxon>
        <taxon>Euarchontoglires</taxon>
        <taxon>Glires</taxon>
        <taxon>Rodentia</taxon>
        <taxon>Myomorpha</taxon>
        <taxon>Muroidea</taxon>
        <taxon>Muridae</taxon>
        <taxon>Murinae</taxon>
        <taxon>Mus</taxon>
        <taxon>Mus</taxon>
    </lineage>
</organism>
<keyword id="KW-0238">DNA-binding</keyword>
<keyword id="KW-1017">Isopeptide bond</keyword>
<keyword id="KW-0479">Metal-binding</keyword>
<keyword id="KW-0539">Nucleus</keyword>
<keyword id="KW-1185">Reference proteome</keyword>
<keyword id="KW-0677">Repeat</keyword>
<keyword id="KW-0804">Transcription</keyword>
<keyword id="KW-0805">Transcription regulation</keyword>
<keyword id="KW-0832">Ubl conjugation</keyword>
<keyword id="KW-0862">Zinc</keyword>
<keyword id="KW-0863">Zinc-finger</keyword>
<gene>
    <name type="primary">Znf770</name>
    <name type="synonym">Zfp770</name>
</gene>